<feature type="chain" id="PRO_0000075682" description="Bifunctional enzyme IspD/IspF">
    <location>
        <begin position="1"/>
        <end position="379"/>
    </location>
</feature>
<feature type="region of interest" description="2-C-methyl-D-erythritol 4-phosphate cytidylyltransferase" evidence="1">
    <location>
        <begin position="1"/>
        <end position="213"/>
    </location>
</feature>
<feature type="region of interest" description="2-C-methyl-D-erythritol 2,4-cyclodiphosphate synthase" evidence="1">
    <location>
        <begin position="214"/>
        <end position="379"/>
    </location>
</feature>
<feature type="binding site" evidence="1">
    <location>
        <begin position="220"/>
        <end position="222"/>
    </location>
    <ligand>
        <name>4-CDP-2-C-methyl-D-erythritol 2-phosphate</name>
        <dbReference type="ChEBI" id="CHEBI:57919"/>
    </ligand>
</feature>
<feature type="binding site" evidence="1">
    <location>
        <position position="220"/>
    </location>
    <ligand>
        <name>a divalent metal cation</name>
        <dbReference type="ChEBI" id="CHEBI:60240"/>
    </ligand>
</feature>
<feature type="binding site" evidence="1">
    <location>
        <position position="222"/>
    </location>
    <ligand>
        <name>a divalent metal cation</name>
        <dbReference type="ChEBI" id="CHEBI:60240"/>
    </ligand>
</feature>
<feature type="binding site" evidence="1">
    <location>
        <begin position="246"/>
        <end position="247"/>
    </location>
    <ligand>
        <name>4-CDP-2-C-methyl-D-erythritol 2-phosphate</name>
        <dbReference type="ChEBI" id="CHEBI:57919"/>
    </ligand>
</feature>
<feature type="binding site" evidence="1">
    <location>
        <position position="254"/>
    </location>
    <ligand>
        <name>a divalent metal cation</name>
        <dbReference type="ChEBI" id="CHEBI:60240"/>
    </ligand>
</feature>
<feature type="binding site" evidence="1">
    <location>
        <begin position="268"/>
        <end position="270"/>
    </location>
    <ligand>
        <name>4-CDP-2-C-methyl-D-erythritol 2-phosphate</name>
        <dbReference type="ChEBI" id="CHEBI:57919"/>
    </ligand>
</feature>
<feature type="binding site" evidence="1">
    <location>
        <begin position="273"/>
        <end position="277"/>
    </location>
    <ligand>
        <name>4-CDP-2-C-methyl-D-erythritol 2-phosphate</name>
        <dbReference type="ChEBI" id="CHEBI:57919"/>
    </ligand>
</feature>
<feature type="binding site" evidence="1">
    <location>
        <begin position="344"/>
        <end position="347"/>
    </location>
    <ligand>
        <name>4-CDP-2-C-methyl-D-erythritol 2-phosphate</name>
        <dbReference type="ChEBI" id="CHEBI:57919"/>
    </ligand>
</feature>
<feature type="binding site" evidence="1">
    <location>
        <position position="351"/>
    </location>
    <ligand>
        <name>4-CDP-2-C-methyl-D-erythritol 2-phosphate</name>
        <dbReference type="ChEBI" id="CHEBI:57919"/>
    </ligand>
</feature>
<feature type="binding site" evidence="1">
    <location>
        <position position="354"/>
    </location>
    <ligand>
        <name>4-CDP-2-C-methyl-D-erythritol 2-phosphate</name>
        <dbReference type="ChEBI" id="CHEBI:57919"/>
    </ligand>
</feature>
<feature type="site" description="Transition state stabilizer" evidence="1">
    <location>
        <position position="16"/>
    </location>
</feature>
<feature type="site" description="Transition state stabilizer" evidence="1">
    <location>
        <position position="25"/>
    </location>
</feature>
<feature type="site" description="Positions MEP for the nucleophilic attack" evidence="1">
    <location>
        <position position="142"/>
    </location>
</feature>
<feature type="site" description="Positions MEP for the nucleophilic attack" evidence="1">
    <location>
        <position position="193"/>
    </location>
</feature>
<feature type="site" description="Transition state stabilizer" evidence="1">
    <location>
        <position position="246"/>
    </location>
</feature>
<feature type="site" description="Transition state stabilizer" evidence="1">
    <location>
        <position position="345"/>
    </location>
</feature>
<gene>
    <name evidence="1" type="primary">ispDF</name>
    <name type="ordered locus">WS1940</name>
</gene>
<sequence>MSQVSLVVMGAGESSRFRQGLSIKKQWLRLGETPLWKHVALHLSKQACFDQVIITASPKEVKYMQKQVDFEVIEGGGTRQESLQNALASVKTPWVLVSDVARFDVPSEVISRVIGRLGEAECVAPAIGVSDTVSYQGEYLSRSEVKLIQTPQLSHVESLLLAFRQGDFTDESSAIAKSGGRVLLVEGSERLKKLTHPHELTLLQGFEPPFGGCYGGSGFDVHAFMEGEGLRLAGVNIPAPVTFKAHSDGDVAIHALIDALLGAAGAGDIGEWFPDSDLAYKGVDSTLLLQEVIKFIRGIGFELINADLTIMAQAPKLSPYKEAMERRLGEVMEVSRQRISVKATTTESLGFVGRKEGVAVSAQVVLKLLDWTKHACFNR</sequence>
<organism>
    <name type="scientific">Wolinella succinogenes (strain ATCC 29543 / DSM 1740 / CCUG 13145 / JCM 31913 / LMG 7466 / NCTC 11488 / FDC 602W)</name>
    <name type="common">Vibrio succinogenes</name>
    <dbReference type="NCBI Taxonomy" id="273121"/>
    <lineage>
        <taxon>Bacteria</taxon>
        <taxon>Pseudomonadati</taxon>
        <taxon>Campylobacterota</taxon>
        <taxon>Epsilonproteobacteria</taxon>
        <taxon>Campylobacterales</taxon>
        <taxon>Helicobacteraceae</taxon>
        <taxon>Wolinella</taxon>
    </lineage>
</organism>
<proteinExistence type="inferred from homology"/>
<reference key="1">
    <citation type="journal article" date="2003" name="Proc. Natl. Acad. Sci. U.S.A.">
        <title>Complete genome sequence and analysis of Wolinella succinogenes.</title>
        <authorList>
            <person name="Baar C."/>
            <person name="Eppinger M."/>
            <person name="Raddatz G."/>
            <person name="Simon J."/>
            <person name="Lanz C."/>
            <person name="Klimmek O."/>
            <person name="Nandakumar R."/>
            <person name="Gross R."/>
            <person name="Rosinus A."/>
            <person name="Keller H."/>
            <person name="Jagtap P."/>
            <person name="Linke B."/>
            <person name="Meyer F."/>
            <person name="Lederer H."/>
            <person name="Schuster S.C."/>
        </authorList>
    </citation>
    <scope>NUCLEOTIDE SEQUENCE [LARGE SCALE GENOMIC DNA]</scope>
    <source>
        <strain>ATCC 29543 / DSM 1740 / CCUG 13145 / JCM 31913 / LMG 7466 / NCTC 11488 / FDC 602W</strain>
    </source>
</reference>
<accession>Q7MQW9</accession>
<protein>
    <recommendedName>
        <fullName evidence="1">Bifunctional enzyme IspD/IspF</fullName>
    </recommendedName>
    <domain>
        <recommendedName>
            <fullName evidence="1">2-C-methyl-D-erythritol 4-phosphate cytidylyltransferase</fullName>
            <ecNumber evidence="1">2.7.7.60</ecNumber>
        </recommendedName>
        <alternativeName>
            <fullName evidence="1">4-diphosphocytidyl-2C-methyl-D-erythritol synthase</fullName>
        </alternativeName>
        <alternativeName>
            <fullName evidence="1">MEP cytidylyltransferase</fullName>
            <shortName evidence="1">MCT</shortName>
        </alternativeName>
    </domain>
    <domain>
        <recommendedName>
            <fullName evidence="1">2-C-methyl-D-erythritol 2,4-cyclodiphosphate synthase</fullName>
            <shortName evidence="1">MECDP-synthase</shortName>
            <shortName evidence="1">MECPP-synthase</shortName>
            <shortName evidence="1">MECPS</shortName>
            <ecNumber evidence="1">4.6.1.12</ecNumber>
        </recommendedName>
    </domain>
</protein>
<comment type="function">
    <text evidence="1">Bifunctional enzyme that catalyzes the formation of 4-diphosphocytidyl-2-C-methyl-D-erythritol from CTP and 2-C-methyl-D-erythritol 4-phosphate (MEP) (IspD), and catalyzes the conversion of 4-diphosphocytidyl-2-C-methyl-D-erythritol 2-phosphate (CDP-ME2P) to 2-C-methyl-D-erythritol 2,4-cyclodiphosphate (ME-CPP) with a corresponding release of cytidine 5-monophosphate (CMP) (IspF).</text>
</comment>
<comment type="catalytic activity">
    <reaction evidence="1">
        <text>2-C-methyl-D-erythritol 4-phosphate + CTP + H(+) = 4-CDP-2-C-methyl-D-erythritol + diphosphate</text>
        <dbReference type="Rhea" id="RHEA:13429"/>
        <dbReference type="ChEBI" id="CHEBI:15378"/>
        <dbReference type="ChEBI" id="CHEBI:33019"/>
        <dbReference type="ChEBI" id="CHEBI:37563"/>
        <dbReference type="ChEBI" id="CHEBI:57823"/>
        <dbReference type="ChEBI" id="CHEBI:58262"/>
        <dbReference type="EC" id="2.7.7.60"/>
    </reaction>
</comment>
<comment type="catalytic activity">
    <reaction evidence="1">
        <text>4-CDP-2-C-methyl-D-erythritol 2-phosphate = 2-C-methyl-D-erythritol 2,4-cyclic diphosphate + CMP</text>
        <dbReference type="Rhea" id="RHEA:23864"/>
        <dbReference type="ChEBI" id="CHEBI:57919"/>
        <dbReference type="ChEBI" id="CHEBI:58483"/>
        <dbReference type="ChEBI" id="CHEBI:60377"/>
        <dbReference type="EC" id="4.6.1.12"/>
    </reaction>
</comment>
<comment type="cofactor">
    <cofactor evidence="1">
        <name>a divalent metal cation</name>
        <dbReference type="ChEBI" id="CHEBI:60240"/>
    </cofactor>
</comment>
<comment type="pathway">
    <text evidence="1">Isoprenoid biosynthesis; isopentenyl diphosphate biosynthesis via DXP pathway; isopentenyl diphosphate from 1-deoxy-D-xylulose 5-phosphate: step 2/6.</text>
</comment>
<comment type="pathway">
    <text evidence="1">Isoprenoid biosynthesis; isopentenyl diphosphate biosynthesis via DXP pathway; isopentenyl diphosphate from 1-deoxy-D-xylulose 5-phosphate: step 4/6.</text>
</comment>
<comment type="similarity">
    <text evidence="1">In the N-terminal section; belongs to the IspD/TarI cytidylyltransferase family. IspD subfamily.</text>
</comment>
<comment type="similarity">
    <text evidence="1">In the C-terminal section; belongs to the IspF family.</text>
</comment>
<dbReference type="EC" id="2.7.7.60" evidence="1"/>
<dbReference type="EC" id="4.6.1.12" evidence="1"/>
<dbReference type="EMBL" id="BX571662">
    <property type="protein sequence ID" value="CAE10946.1"/>
    <property type="molecule type" value="Genomic_DNA"/>
</dbReference>
<dbReference type="RefSeq" id="WP_011139729.1">
    <property type="nucleotide sequence ID" value="NC_005090.1"/>
</dbReference>
<dbReference type="SMR" id="Q7MQW9"/>
<dbReference type="STRING" id="273121.WS1940"/>
<dbReference type="KEGG" id="wsu:WS1940"/>
<dbReference type="eggNOG" id="COG0245">
    <property type="taxonomic scope" value="Bacteria"/>
</dbReference>
<dbReference type="eggNOG" id="COG1211">
    <property type="taxonomic scope" value="Bacteria"/>
</dbReference>
<dbReference type="HOGENOM" id="CLU_042800_2_6_7"/>
<dbReference type="UniPathway" id="UPA00056">
    <property type="reaction ID" value="UER00093"/>
</dbReference>
<dbReference type="UniPathway" id="UPA00056">
    <property type="reaction ID" value="UER00095"/>
</dbReference>
<dbReference type="Proteomes" id="UP000000422">
    <property type="component" value="Chromosome"/>
</dbReference>
<dbReference type="GO" id="GO:0008685">
    <property type="term" value="F:2-C-methyl-D-erythritol 2,4-cyclodiphosphate synthase activity"/>
    <property type="evidence" value="ECO:0007669"/>
    <property type="project" value="UniProtKB-UniRule"/>
</dbReference>
<dbReference type="GO" id="GO:0050518">
    <property type="term" value="F:2-C-methyl-D-erythritol 4-phosphate cytidylyltransferase activity"/>
    <property type="evidence" value="ECO:0007669"/>
    <property type="project" value="UniProtKB-UniRule"/>
</dbReference>
<dbReference type="GO" id="GO:0046872">
    <property type="term" value="F:metal ion binding"/>
    <property type="evidence" value="ECO:0007669"/>
    <property type="project" value="UniProtKB-KW"/>
</dbReference>
<dbReference type="GO" id="GO:0019288">
    <property type="term" value="P:isopentenyl diphosphate biosynthetic process, methylerythritol 4-phosphate pathway"/>
    <property type="evidence" value="ECO:0007669"/>
    <property type="project" value="UniProtKB-UniRule"/>
</dbReference>
<dbReference type="GO" id="GO:0016114">
    <property type="term" value="P:terpenoid biosynthetic process"/>
    <property type="evidence" value="ECO:0007669"/>
    <property type="project" value="InterPro"/>
</dbReference>
<dbReference type="CDD" id="cd02516">
    <property type="entry name" value="CDP-ME_synthetase"/>
    <property type="match status" value="1"/>
</dbReference>
<dbReference type="CDD" id="cd00554">
    <property type="entry name" value="MECDP_synthase"/>
    <property type="match status" value="1"/>
</dbReference>
<dbReference type="Gene3D" id="3.30.1330.50">
    <property type="entry name" value="2-C-methyl-D-erythritol 2,4-cyclodiphosphate synthase"/>
    <property type="match status" value="1"/>
</dbReference>
<dbReference type="Gene3D" id="3.90.550.10">
    <property type="entry name" value="Spore Coat Polysaccharide Biosynthesis Protein SpsA, Chain A"/>
    <property type="match status" value="1"/>
</dbReference>
<dbReference type="HAMAP" id="MF_01520">
    <property type="entry name" value="IspDF"/>
    <property type="match status" value="1"/>
</dbReference>
<dbReference type="HAMAP" id="MF_00107">
    <property type="entry name" value="IspF"/>
    <property type="match status" value="1"/>
</dbReference>
<dbReference type="InterPro" id="IPR026596">
    <property type="entry name" value="IspD/F"/>
</dbReference>
<dbReference type="InterPro" id="IPR034683">
    <property type="entry name" value="IspD/TarI"/>
</dbReference>
<dbReference type="InterPro" id="IPR018294">
    <property type="entry name" value="ISPD_synthase_CS"/>
</dbReference>
<dbReference type="InterPro" id="IPR003526">
    <property type="entry name" value="MECDP_synthase"/>
</dbReference>
<dbReference type="InterPro" id="IPR020555">
    <property type="entry name" value="MECDP_synthase_CS"/>
</dbReference>
<dbReference type="InterPro" id="IPR036571">
    <property type="entry name" value="MECDP_synthase_sf"/>
</dbReference>
<dbReference type="InterPro" id="IPR029044">
    <property type="entry name" value="Nucleotide-diphossugar_trans"/>
</dbReference>
<dbReference type="NCBIfam" id="TIGR00151">
    <property type="entry name" value="ispF"/>
    <property type="match status" value="1"/>
</dbReference>
<dbReference type="NCBIfam" id="NF006899">
    <property type="entry name" value="PRK09382.1"/>
    <property type="match status" value="1"/>
</dbReference>
<dbReference type="PANTHER" id="PTHR43181">
    <property type="entry name" value="2-C-METHYL-D-ERYTHRITOL 2,4-CYCLODIPHOSPHATE SYNTHASE, CHLOROPLASTIC"/>
    <property type="match status" value="1"/>
</dbReference>
<dbReference type="PANTHER" id="PTHR43181:SF1">
    <property type="entry name" value="2-C-METHYL-D-ERYTHRITOL 2,4-CYCLODIPHOSPHATE SYNTHASE, CHLOROPLASTIC"/>
    <property type="match status" value="1"/>
</dbReference>
<dbReference type="Pfam" id="PF01128">
    <property type="entry name" value="IspD"/>
    <property type="match status" value="1"/>
</dbReference>
<dbReference type="Pfam" id="PF02542">
    <property type="entry name" value="YgbB"/>
    <property type="match status" value="1"/>
</dbReference>
<dbReference type="SUPFAM" id="SSF69765">
    <property type="entry name" value="IpsF-like"/>
    <property type="match status" value="1"/>
</dbReference>
<dbReference type="SUPFAM" id="SSF53448">
    <property type="entry name" value="Nucleotide-diphospho-sugar transferases"/>
    <property type="match status" value="1"/>
</dbReference>
<dbReference type="PROSITE" id="PS01295">
    <property type="entry name" value="ISPD"/>
    <property type="match status" value="1"/>
</dbReference>
<dbReference type="PROSITE" id="PS01350">
    <property type="entry name" value="ISPF"/>
    <property type="match status" value="1"/>
</dbReference>
<evidence type="ECO:0000255" key="1">
    <source>
        <dbReference type="HAMAP-Rule" id="MF_01520"/>
    </source>
</evidence>
<name>ISPDF_WOLSU</name>
<keyword id="KW-0414">Isoprene biosynthesis</keyword>
<keyword id="KW-0456">Lyase</keyword>
<keyword id="KW-0479">Metal-binding</keyword>
<keyword id="KW-0511">Multifunctional enzyme</keyword>
<keyword id="KW-0548">Nucleotidyltransferase</keyword>
<keyword id="KW-1185">Reference proteome</keyword>
<keyword id="KW-0808">Transferase</keyword>